<evidence type="ECO:0000255" key="1">
    <source>
        <dbReference type="HAMAP-Rule" id="MF_01523"/>
    </source>
</evidence>
<protein>
    <recommendedName>
        <fullName evidence="1">Ribosomal RNA small subunit methyltransferase J</fullName>
        <ecNumber evidence="1">2.1.1.242</ecNumber>
    </recommendedName>
    <alternativeName>
        <fullName evidence="1">16S rRNA m2G1516 methyltransferase</fullName>
    </alternativeName>
    <alternativeName>
        <fullName evidence="1">rRNA (guanine-N(2)-)-methyltransferase</fullName>
    </alternativeName>
</protein>
<dbReference type="EC" id="2.1.1.242" evidence="1"/>
<dbReference type="EMBL" id="CP000733">
    <property type="protein sequence ID" value="ABS77725.1"/>
    <property type="molecule type" value="Genomic_DNA"/>
</dbReference>
<dbReference type="RefSeq" id="WP_011996411.1">
    <property type="nucleotide sequence ID" value="NC_009727.1"/>
</dbReference>
<dbReference type="SMR" id="A9KB94"/>
<dbReference type="KEGG" id="cbd:CBUD_0108"/>
<dbReference type="HOGENOM" id="CLU_076324_0_1_6"/>
<dbReference type="Proteomes" id="UP000008555">
    <property type="component" value="Chromosome"/>
</dbReference>
<dbReference type="GO" id="GO:0005737">
    <property type="term" value="C:cytoplasm"/>
    <property type="evidence" value="ECO:0007669"/>
    <property type="project" value="UniProtKB-SubCell"/>
</dbReference>
<dbReference type="GO" id="GO:0008990">
    <property type="term" value="F:rRNA (guanine-N2-)-methyltransferase activity"/>
    <property type="evidence" value="ECO:0007669"/>
    <property type="project" value="UniProtKB-UniRule"/>
</dbReference>
<dbReference type="CDD" id="cd02440">
    <property type="entry name" value="AdoMet_MTases"/>
    <property type="match status" value="1"/>
</dbReference>
<dbReference type="Gene3D" id="3.40.50.150">
    <property type="entry name" value="Vaccinia Virus protein VP39"/>
    <property type="match status" value="1"/>
</dbReference>
<dbReference type="HAMAP" id="MF_01523">
    <property type="entry name" value="16SrRNA_methyltr_J"/>
    <property type="match status" value="1"/>
</dbReference>
<dbReference type="InterPro" id="IPR007536">
    <property type="entry name" value="16SrRNA_methylTrfase_J"/>
</dbReference>
<dbReference type="InterPro" id="IPR029063">
    <property type="entry name" value="SAM-dependent_MTases_sf"/>
</dbReference>
<dbReference type="PANTHER" id="PTHR36112">
    <property type="entry name" value="RIBOSOMAL RNA SMALL SUBUNIT METHYLTRANSFERASE J"/>
    <property type="match status" value="1"/>
</dbReference>
<dbReference type="PANTHER" id="PTHR36112:SF1">
    <property type="entry name" value="RIBOSOMAL RNA SMALL SUBUNIT METHYLTRANSFERASE J"/>
    <property type="match status" value="1"/>
</dbReference>
<dbReference type="Pfam" id="PF04445">
    <property type="entry name" value="SAM_MT"/>
    <property type="match status" value="1"/>
</dbReference>
<dbReference type="SUPFAM" id="SSF53335">
    <property type="entry name" value="S-adenosyl-L-methionine-dependent methyltransferases"/>
    <property type="match status" value="1"/>
</dbReference>
<name>RSMJ_COXBN</name>
<keyword id="KW-0963">Cytoplasm</keyword>
<keyword id="KW-0489">Methyltransferase</keyword>
<keyword id="KW-0698">rRNA processing</keyword>
<keyword id="KW-0949">S-adenosyl-L-methionine</keyword>
<keyword id="KW-0808">Transferase</keyword>
<proteinExistence type="inferred from homology"/>
<comment type="function">
    <text evidence="1">Specifically methylates the guanosine in position 1516 of 16S rRNA.</text>
</comment>
<comment type="catalytic activity">
    <reaction evidence="1">
        <text>guanosine(1516) in 16S rRNA + S-adenosyl-L-methionine = N(2)-methylguanosine(1516) in 16S rRNA + S-adenosyl-L-homocysteine + H(+)</text>
        <dbReference type="Rhea" id="RHEA:43220"/>
        <dbReference type="Rhea" id="RHEA-COMP:10412"/>
        <dbReference type="Rhea" id="RHEA-COMP:10413"/>
        <dbReference type="ChEBI" id="CHEBI:15378"/>
        <dbReference type="ChEBI" id="CHEBI:57856"/>
        <dbReference type="ChEBI" id="CHEBI:59789"/>
        <dbReference type="ChEBI" id="CHEBI:74269"/>
        <dbReference type="ChEBI" id="CHEBI:74481"/>
        <dbReference type="EC" id="2.1.1.242"/>
    </reaction>
</comment>
<comment type="subcellular location">
    <subcellularLocation>
        <location evidence="1">Cytoplasm</location>
    </subcellularLocation>
</comment>
<comment type="similarity">
    <text evidence="1">Belongs to the methyltransferase superfamily. RsmJ family.</text>
</comment>
<sequence length="254" mass="28302">MNDTLAITYSTPARLSEAEKLARQMKLPLVSLNSTDYSFLLVFTPAHLELRSTGTKAPGPLYVDFLKGATAHRRLFGGGRSQLIVRAVGLKSHPHPTILDLTAGLGRDAFVLANFGCDVLMIERNPVIALLLRDGLERAQSVEWFKSLKLELIEIDAQIYLSTLKKQFDVIYMDPMYPIRKKSALVKKEMRILRRLVGADDDAPQLLALALKKAKHRVVIKRPLLSNPLPGPAPDVVYEGKSSRFDVYLLKPSS</sequence>
<feature type="chain" id="PRO_1000087563" description="Ribosomal RNA small subunit methyltransferase J">
    <location>
        <begin position="1"/>
        <end position="254"/>
    </location>
</feature>
<feature type="binding site" evidence="1">
    <location>
        <begin position="107"/>
        <end position="108"/>
    </location>
    <ligand>
        <name>S-adenosyl-L-methionine</name>
        <dbReference type="ChEBI" id="CHEBI:59789"/>
    </ligand>
</feature>
<feature type="binding site" evidence="1">
    <location>
        <begin position="123"/>
        <end position="124"/>
    </location>
    <ligand>
        <name>S-adenosyl-L-methionine</name>
        <dbReference type="ChEBI" id="CHEBI:59789"/>
    </ligand>
</feature>
<feature type="binding site" evidence="1">
    <location>
        <position position="174"/>
    </location>
    <ligand>
        <name>S-adenosyl-L-methionine</name>
        <dbReference type="ChEBI" id="CHEBI:59789"/>
    </ligand>
</feature>
<accession>A9KB94</accession>
<reference key="1">
    <citation type="journal article" date="2009" name="Infect. Immun.">
        <title>Comparative genomics reveal extensive transposon-mediated genomic plasticity and diversity among potential effector proteins within the genus Coxiella.</title>
        <authorList>
            <person name="Beare P.A."/>
            <person name="Unsworth N."/>
            <person name="Andoh M."/>
            <person name="Voth D.E."/>
            <person name="Omsland A."/>
            <person name="Gilk S.D."/>
            <person name="Williams K.P."/>
            <person name="Sobral B.W."/>
            <person name="Kupko J.J. III"/>
            <person name="Porcella S.F."/>
            <person name="Samuel J.E."/>
            <person name="Heinzen R.A."/>
        </authorList>
    </citation>
    <scope>NUCLEOTIDE SEQUENCE [LARGE SCALE GENOMIC DNA]</scope>
    <source>
        <strain>Dugway 5J108-111</strain>
    </source>
</reference>
<organism>
    <name type="scientific">Coxiella burnetii (strain Dugway 5J108-111)</name>
    <dbReference type="NCBI Taxonomy" id="434922"/>
    <lineage>
        <taxon>Bacteria</taxon>
        <taxon>Pseudomonadati</taxon>
        <taxon>Pseudomonadota</taxon>
        <taxon>Gammaproteobacteria</taxon>
        <taxon>Legionellales</taxon>
        <taxon>Coxiellaceae</taxon>
        <taxon>Coxiella</taxon>
    </lineage>
</organism>
<gene>
    <name evidence="1" type="primary">rsmJ</name>
    <name type="ordered locus">CBUD_0108</name>
</gene>